<proteinExistence type="inferred from homology"/>
<feature type="chain" id="PRO_0000262017" description="UPF0246 protein FTL_1717">
    <location>
        <begin position="1"/>
        <end position="254"/>
    </location>
</feature>
<name>Y1717_FRATH</name>
<accession>Q2A1Q4</accession>
<sequence length="254" mass="29360">MIIVISPAKSQNFEPIKTAYQFTQPIFKQQIIKLINTLKHYEVEEIEKLMKISPKLAEEVFAKHNSFNPNKYDNSNAKAAIFTFSGDVYKGLEADTLDNKTIEYAQNHLLMLSGLYGLVRPLDLIQAYRLEMGTNIKIDGKILHKYWQDKITTQLNEYFSQQQNKILINLASNEYSQAIDKKSLAVKWLDIDFKENKAGAYKTIGIHAKKARGLMTRYILENRIENVSDIKKFNVAGYQFNPDFSDENLLCFTR</sequence>
<keyword id="KW-1185">Reference proteome</keyword>
<reference key="1">
    <citation type="submission" date="2006-03" db="EMBL/GenBank/DDBJ databases">
        <title>Complete genome sequence of Francisella tularensis LVS (Live Vaccine Strain).</title>
        <authorList>
            <person name="Chain P."/>
            <person name="Larimer F."/>
            <person name="Land M."/>
            <person name="Stilwagen S."/>
            <person name="Larsson P."/>
            <person name="Bearden S."/>
            <person name="Chu M."/>
            <person name="Oyston P."/>
            <person name="Forsman M."/>
            <person name="Andersson S."/>
            <person name="Lindler L."/>
            <person name="Titball R."/>
            <person name="Garcia E."/>
        </authorList>
    </citation>
    <scope>NUCLEOTIDE SEQUENCE [LARGE SCALE GENOMIC DNA]</scope>
    <source>
        <strain>LVS</strain>
    </source>
</reference>
<dbReference type="EMBL" id="AM233362">
    <property type="protein sequence ID" value="CAJ80156.1"/>
    <property type="status" value="ALT_INIT"/>
    <property type="molecule type" value="Genomic_DNA"/>
</dbReference>
<dbReference type="SMR" id="Q2A1Q4"/>
<dbReference type="KEGG" id="ftl:FTL_1717"/>
<dbReference type="Proteomes" id="UP000001944">
    <property type="component" value="Chromosome"/>
</dbReference>
<dbReference type="GO" id="GO:0005829">
    <property type="term" value="C:cytosol"/>
    <property type="evidence" value="ECO:0007669"/>
    <property type="project" value="TreeGrafter"/>
</dbReference>
<dbReference type="GO" id="GO:0033194">
    <property type="term" value="P:response to hydroperoxide"/>
    <property type="evidence" value="ECO:0007669"/>
    <property type="project" value="TreeGrafter"/>
</dbReference>
<dbReference type="HAMAP" id="MF_00652">
    <property type="entry name" value="UPF0246"/>
    <property type="match status" value="1"/>
</dbReference>
<dbReference type="InterPro" id="IPR005583">
    <property type="entry name" value="YaaA"/>
</dbReference>
<dbReference type="NCBIfam" id="NF002542">
    <property type="entry name" value="PRK02101.1-3"/>
    <property type="match status" value="1"/>
</dbReference>
<dbReference type="PANTHER" id="PTHR30283:SF4">
    <property type="entry name" value="PEROXIDE STRESS RESISTANCE PROTEIN YAAA"/>
    <property type="match status" value="1"/>
</dbReference>
<dbReference type="PANTHER" id="PTHR30283">
    <property type="entry name" value="PEROXIDE STRESS RESPONSE PROTEIN YAAA"/>
    <property type="match status" value="1"/>
</dbReference>
<dbReference type="Pfam" id="PF03883">
    <property type="entry name" value="H2O2_YaaD"/>
    <property type="match status" value="1"/>
</dbReference>
<gene>
    <name type="ordered locus">FTL_1717</name>
</gene>
<protein>
    <recommendedName>
        <fullName evidence="1">UPF0246 protein FTL_1717</fullName>
    </recommendedName>
</protein>
<comment type="similarity">
    <text evidence="1">Belongs to the UPF0246 family.</text>
</comment>
<comment type="sequence caution" evidence="2">
    <conflict type="erroneous initiation">
        <sequence resource="EMBL-CDS" id="CAJ80156"/>
    </conflict>
</comment>
<evidence type="ECO:0000255" key="1">
    <source>
        <dbReference type="HAMAP-Rule" id="MF_00652"/>
    </source>
</evidence>
<evidence type="ECO:0000305" key="2"/>
<organism>
    <name type="scientific">Francisella tularensis subsp. holarctica (strain LVS)</name>
    <dbReference type="NCBI Taxonomy" id="376619"/>
    <lineage>
        <taxon>Bacteria</taxon>
        <taxon>Pseudomonadati</taxon>
        <taxon>Pseudomonadota</taxon>
        <taxon>Gammaproteobacteria</taxon>
        <taxon>Thiotrichales</taxon>
        <taxon>Francisellaceae</taxon>
        <taxon>Francisella</taxon>
    </lineage>
</organism>